<evidence type="ECO:0000250" key="1">
    <source>
        <dbReference type="UniProtKB" id="Q8IIS0"/>
    </source>
</evidence>
<evidence type="ECO:0000250" key="2">
    <source>
        <dbReference type="UniProtKB" id="Q8TEA8"/>
    </source>
</evidence>
<evidence type="ECO:0000256" key="3">
    <source>
        <dbReference type="SAM" id="MobiDB-lite"/>
    </source>
</evidence>
<evidence type="ECO:0000303" key="4">
    <source>
    </source>
</evidence>
<evidence type="ECO:0000303" key="5">
    <source>
    </source>
</evidence>
<evidence type="ECO:0000305" key="6"/>
<evidence type="ECO:0007744" key="7">
    <source>
    </source>
</evidence>
<evidence type="ECO:0007744" key="8">
    <source>
    </source>
</evidence>
<organism>
    <name type="scientific">Mus musculus</name>
    <name type="common">Mouse</name>
    <dbReference type="NCBI Taxonomy" id="10090"/>
    <lineage>
        <taxon>Eukaryota</taxon>
        <taxon>Metazoa</taxon>
        <taxon>Chordata</taxon>
        <taxon>Craniata</taxon>
        <taxon>Vertebrata</taxon>
        <taxon>Euteleostomi</taxon>
        <taxon>Mammalia</taxon>
        <taxon>Eutheria</taxon>
        <taxon>Euarchontoglires</taxon>
        <taxon>Glires</taxon>
        <taxon>Rodentia</taxon>
        <taxon>Myomorpha</taxon>
        <taxon>Muroidea</taxon>
        <taxon>Muridae</taxon>
        <taxon>Murinae</taxon>
        <taxon>Mus</taxon>
        <taxon>Mus</taxon>
    </lineage>
</organism>
<sequence length="209" mass="23384">MKAVVQRVTRASVTVGGEQISAIGRGICVLLGISMEDSQKELEHMVRKILNLRVFEDESGKHWSKSVMDKEYEVLCVSQFTLQCVLKGNKPDFHLAMPTEQAESFYNSFLEQLRKSYRPELIRDGKFGAYMQVHIQNDGPVTIELESPAPGAASSDPKQLSKLEKQQQRKEKTRAKGPSESSKERNAPRKEDRSASSGAEGDVSSEREP</sequence>
<accession>Q9DD18</accession>
<accession>A2ANA2</accession>
<accession>Q3TY44</accession>
<accession>Q9CRE8</accession>
<accession>Q9CYL0</accession>
<accession>Q9D013</accession>
<accession>Q9D1G4</accession>
<reference key="1">
    <citation type="journal article" date="2005" name="Science">
        <title>The transcriptional landscape of the mammalian genome.</title>
        <authorList>
            <person name="Carninci P."/>
            <person name="Kasukawa T."/>
            <person name="Katayama S."/>
            <person name="Gough J."/>
            <person name="Frith M.C."/>
            <person name="Maeda N."/>
            <person name="Oyama R."/>
            <person name="Ravasi T."/>
            <person name="Lenhard B."/>
            <person name="Wells C."/>
            <person name="Kodzius R."/>
            <person name="Shimokawa K."/>
            <person name="Bajic V.B."/>
            <person name="Brenner S.E."/>
            <person name="Batalov S."/>
            <person name="Forrest A.R."/>
            <person name="Zavolan M."/>
            <person name="Davis M.J."/>
            <person name="Wilming L.G."/>
            <person name="Aidinis V."/>
            <person name="Allen J.E."/>
            <person name="Ambesi-Impiombato A."/>
            <person name="Apweiler R."/>
            <person name="Aturaliya R.N."/>
            <person name="Bailey T.L."/>
            <person name="Bansal M."/>
            <person name="Baxter L."/>
            <person name="Beisel K.W."/>
            <person name="Bersano T."/>
            <person name="Bono H."/>
            <person name="Chalk A.M."/>
            <person name="Chiu K.P."/>
            <person name="Choudhary V."/>
            <person name="Christoffels A."/>
            <person name="Clutterbuck D.R."/>
            <person name="Crowe M.L."/>
            <person name="Dalla E."/>
            <person name="Dalrymple B.P."/>
            <person name="de Bono B."/>
            <person name="Della Gatta G."/>
            <person name="di Bernardo D."/>
            <person name="Down T."/>
            <person name="Engstrom P."/>
            <person name="Fagiolini M."/>
            <person name="Faulkner G."/>
            <person name="Fletcher C.F."/>
            <person name="Fukushima T."/>
            <person name="Furuno M."/>
            <person name="Futaki S."/>
            <person name="Gariboldi M."/>
            <person name="Georgii-Hemming P."/>
            <person name="Gingeras T.R."/>
            <person name="Gojobori T."/>
            <person name="Green R.E."/>
            <person name="Gustincich S."/>
            <person name="Harbers M."/>
            <person name="Hayashi Y."/>
            <person name="Hensch T.K."/>
            <person name="Hirokawa N."/>
            <person name="Hill D."/>
            <person name="Huminiecki L."/>
            <person name="Iacono M."/>
            <person name="Ikeo K."/>
            <person name="Iwama A."/>
            <person name="Ishikawa T."/>
            <person name="Jakt M."/>
            <person name="Kanapin A."/>
            <person name="Katoh M."/>
            <person name="Kawasawa Y."/>
            <person name="Kelso J."/>
            <person name="Kitamura H."/>
            <person name="Kitano H."/>
            <person name="Kollias G."/>
            <person name="Krishnan S.P."/>
            <person name="Kruger A."/>
            <person name="Kummerfeld S.K."/>
            <person name="Kurochkin I.V."/>
            <person name="Lareau L.F."/>
            <person name="Lazarevic D."/>
            <person name="Lipovich L."/>
            <person name="Liu J."/>
            <person name="Liuni S."/>
            <person name="McWilliam S."/>
            <person name="Madan Babu M."/>
            <person name="Madera M."/>
            <person name="Marchionni L."/>
            <person name="Matsuda H."/>
            <person name="Matsuzawa S."/>
            <person name="Miki H."/>
            <person name="Mignone F."/>
            <person name="Miyake S."/>
            <person name="Morris K."/>
            <person name="Mottagui-Tabar S."/>
            <person name="Mulder N."/>
            <person name="Nakano N."/>
            <person name="Nakauchi H."/>
            <person name="Ng P."/>
            <person name="Nilsson R."/>
            <person name="Nishiguchi S."/>
            <person name="Nishikawa S."/>
            <person name="Nori F."/>
            <person name="Ohara O."/>
            <person name="Okazaki Y."/>
            <person name="Orlando V."/>
            <person name="Pang K.C."/>
            <person name="Pavan W.J."/>
            <person name="Pavesi G."/>
            <person name="Pesole G."/>
            <person name="Petrovsky N."/>
            <person name="Piazza S."/>
            <person name="Reed J."/>
            <person name="Reid J.F."/>
            <person name="Ring B.Z."/>
            <person name="Ringwald M."/>
            <person name="Rost B."/>
            <person name="Ruan Y."/>
            <person name="Salzberg S.L."/>
            <person name="Sandelin A."/>
            <person name="Schneider C."/>
            <person name="Schoenbach C."/>
            <person name="Sekiguchi K."/>
            <person name="Semple C.A."/>
            <person name="Seno S."/>
            <person name="Sessa L."/>
            <person name="Sheng Y."/>
            <person name="Shibata Y."/>
            <person name="Shimada H."/>
            <person name="Shimada K."/>
            <person name="Silva D."/>
            <person name="Sinclair B."/>
            <person name="Sperling S."/>
            <person name="Stupka E."/>
            <person name="Sugiura K."/>
            <person name="Sultana R."/>
            <person name="Takenaka Y."/>
            <person name="Taki K."/>
            <person name="Tammoja K."/>
            <person name="Tan S.L."/>
            <person name="Tang S."/>
            <person name="Taylor M.S."/>
            <person name="Tegner J."/>
            <person name="Teichmann S.A."/>
            <person name="Ueda H.R."/>
            <person name="van Nimwegen E."/>
            <person name="Verardo R."/>
            <person name="Wei C.L."/>
            <person name="Yagi K."/>
            <person name="Yamanishi H."/>
            <person name="Zabarovsky E."/>
            <person name="Zhu S."/>
            <person name="Zimmer A."/>
            <person name="Hide W."/>
            <person name="Bult C."/>
            <person name="Grimmond S.M."/>
            <person name="Teasdale R.D."/>
            <person name="Liu E.T."/>
            <person name="Brusic V."/>
            <person name="Quackenbush J."/>
            <person name="Wahlestedt C."/>
            <person name="Mattick J.S."/>
            <person name="Hume D.A."/>
            <person name="Kai C."/>
            <person name="Sasaki D."/>
            <person name="Tomaru Y."/>
            <person name="Fukuda S."/>
            <person name="Kanamori-Katayama M."/>
            <person name="Suzuki M."/>
            <person name="Aoki J."/>
            <person name="Arakawa T."/>
            <person name="Iida J."/>
            <person name="Imamura K."/>
            <person name="Itoh M."/>
            <person name="Kato T."/>
            <person name="Kawaji H."/>
            <person name="Kawagashira N."/>
            <person name="Kawashima T."/>
            <person name="Kojima M."/>
            <person name="Kondo S."/>
            <person name="Konno H."/>
            <person name="Nakano K."/>
            <person name="Ninomiya N."/>
            <person name="Nishio T."/>
            <person name="Okada M."/>
            <person name="Plessy C."/>
            <person name="Shibata K."/>
            <person name="Shiraki T."/>
            <person name="Suzuki S."/>
            <person name="Tagami M."/>
            <person name="Waki K."/>
            <person name="Watahiki A."/>
            <person name="Okamura-Oho Y."/>
            <person name="Suzuki H."/>
            <person name="Kawai J."/>
            <person name="Hayashizaki Y."/>
        </authorList>
    </citation>
    <scope>NUCLEOTIDE SEQUENCE [LARGE SCALE MRNA] (ISOFORMS 1 AND 2)</scope>
    <source>
        <strain>C57BL/6J</strain>
        <tissue>Embryo</tissue>
        <tissue>Embryonic stem cell</tissue>
        <tissue>Visual cortex</tissue>
    </source>
</reference>
<reference key="2">
    <citation type="journal article" date="2009" name="PLoS Biol.">
        <title>Lineage-specific biology revealed by a finished genome assembly of the mouse.</title>
        <authorList>
            <person name="Church D.M."/>
            <person name="Goodstadt L."/>
            <person name="Hillier L.W."/>
            <person name="Zody M.C."/>
            <person name="Goldstein S."/>
            <person name="She X."/>
            <person name="Bult C.J."/>
            <person name="Agarwala R."/>
            <person name="Cherry J.L."/>
            <person name="DiCuccio M."/>
            <person name="Hlavina W."/>
            <person name="Kapustin Y."/>
            <person name="Meric P."/>
            <person name="Maglott D."/>
            <person name="Birtle Z."/>
            <person name="Marques A.C."/>
            <person name="Graves T."/>
            <person name="Zhou S."/>
            <person name="Teague B."/>
            <person name="Potamousis K."/>
            <person name="Churas C."/>
            <person name="Place M."/>
            <person name="Herschleb J."/>
            <person name="Runnheim R."/>
            <person name="Forrest D."/>
            <person name="Amos-Landgraf J."/>
            <person name="Schwartz D.C."/>
            <person name="Cheng Z."/>
            <person name="Lindblad-Toh K."/>
            <person name="Eichler E.E."/>
            <person name="Ponting C.P."/>
        </authorList>
    </citation>
    <scope>NUCLEOTIDE SEQUENCE [LARGE SCALE GENOMIC DNA]</scope>
    <source>
        <strain>C57BL/6J</strain>
    </source>
</reference>
<reference key="3">
    <citation type="journal article" date="2004" name="Genome Res.">
        <title>The status, quality, and expansion of the NIH full-length cDNA project: the Mammalian Gene Collection (MGC).</title>
        <authorList>
            <consortium name="The MGC Project Team"/>
        </authorList>
    </citation>
    <scope>NUCLEOTIDE SEQUENCE [LARGE SCALE MRNA] (ISOFORM 2)</scope>
    <source>
        <strain>FVB/N-3</strain>
        <tissue>Mammary gland</tissue>
    </source>
</reference>
<reference key="4">
    <citation type="submission" date="2009-01" db="UniProtKB">
        <authorList>
            <person name="Lubec G."/>
            <person name="Sunyer B."/>
            <person name="Chen W.-Q."/>
        </authorList>
    </citation>
    <scope>PROTEIN SEQUENCE OF 11-25</scope>
    <scope>IDENTIFICATION BY MASS SPECTROMETRY</scope>
    <source>
        <strain>OF1</strain>
        <tissue>Hippocampus</tissue>
    </source>
</reference>
<reference key="5">
    <citation type="journal article" date="2007" name="Proc. Natl. Acad. Sci. U.S.A.">
        <title>Large-scale phosphorylation analysis of mouse liver.</title>
        <authorList>
            <person name="Villen J."/>
            <person name="Beausoleil S.A."/>
            <person name="Gerber S.A."/>
            <person name="Gygi S.P."/>
        </authorList>
    </citation>
    <scope>PHOSPHORYLATION [LARGE SCALE ANALYSIS] AT SER-205</scope>
    <scope>IDENTIFICATION BY MASS SPECTROMETRY [LARGE SCALE ANALYSIS]</scope>
    <source>
        <tissue>Liver</tissue>
    </source>
</reference>
<reference key="6">
    <citation type="journal article" date="2010" name="Cell">
        <title>A tissue-specific atlas of mouse protein phosphorylation and expression.</title>
        <authorList>
            <person name="Huttlin E.L."/>
            <person name="Jedrychowski M.P."/>
            <person name="Elias J.E."/>
            <person name="Goswami T."/>
            <person name="Rad R."/>
            <person name="Beausoleil S.A."/>
            <person name="Villen J."/>
            <person name="Haas W."/>
            <person name="Sowa M.E."/>
            <person name="Gygi S.P."/>
        </authorList>
    </citation>
    <scope>PHOSPHORYLATION [LARGE SCALE ANALYSIS] AT SER-197; SER-204 AND SER-205</scope>
    <scope>IDENTIFICATION BY MASS SPECTROMETRY [LARGE SCALE ANALYSIS]</scope>
    <source>
        <tissue>Brain</tissue>
        <tissue>Brown adipose tissue</tissue>
        <tissue>Heart</tissue>
        <tissue>Kidney</tissue>
        <tissue>Liver</tissue>
        <tissue>Lung</tissue>
        <tissue>Pancreas</tissue>
        <tissue>Spleen</tissue>
        <tissue>Testis</tissue>
    </source>
</reference>
<proteinExistence type="evidence at protein level"/>
<feature type="chain" id="PRO_0000164627" description="D-aminoacyl-tRNA deacylase 1">
    <location>
        <begin position="1"/>
        <end position="209"/>
    </location>
</feature>
<feature type="region of interest" description="Disordered" evidence="3">
    <location>
        <begin position="142"/>
        <end position="209"/>
    </location>
</feature>
<feature type="short sequence motif" description="Gly-cisPro motif, important for rejection of L-amino acids" evidence="1">
    <location>
        <begin position="139"/>
        <end position="140"/>
    </location>
</feature>
<feature type="compositionally biased region" description="Basic and acidic residues" evidence="3">
    <location>
        <begin position="159"/>
        <end position="170"/>
    </location>
</feature>
<feature type="compositionally biased region" description="Basic and acidic residues" evidence="3">
    <location>
        <begin position="181"/>
        <end position="194"/>
    </location>
</feature>
<feature type="modified residue" description="Phosphoserine" evidence="8">
    <location>
        <position position="197"/>
    </location>
</feature>
<feature type="modified residue" description="Phosphoserine" evidence="8">
    <location>
        <position position="204"/>
    </location>
</feature>
<feature type="modified residue" description="Phosphoserine" evidence="7 8">
    <location>
        <position position="205"/>
    </location>
</feature>
<feature type="splice variant" id="VSP_026130" description="In isoform 2." evidence="4 5">
    <original>AEGDVSSEREP</original>
    <variation>DRG</variation>
    <location>
        <begin position="199"/>
        <end position="209"/>
    </location>
</feature>
<feature type="sequence conflict" description="In Ref. 1; BAB27205." evidence="6" ref="1">
    <original>L</original>
    <variation>F</variation>
    <location>
        <position position="30"/>
    </location>
</feature>
<feature type="sequence conflict" description="In Ref. 1; BAB30808." evidence="6" ref="1">
    <original>A</original>
    <variation>T</variation>
    <location>
        <position position="102"/>
    </location>
</feature>
<feature type="sequence conflict" description="In Ref. 1; BAE34719." evidence="6" ref="1">
    <original>L</original>
    <variation>M</variation>
    <location>
        <position position="145"/>
    </location>
</feature>
<keyword id="KW-0025">Alternative splicing</keyword>
<keyword id="KW-0963">Cytoplasm</keyword>
<keyword id="KW-0903">Direct protein sequencing</keyword>
<keyword id="KW-0235">DNA replication</keyword>
<keyword id="KW-0238">DNA-binding</keyword>
<keyword id="KW-0378">Hydrolase</keyword>
<keyword id="KW-0479">Metal-binding</keyword>
<keyword id="KW-0539">Nucleus</keyword>
<keyword id="KW-0597">Phosphoprotein</keyword>
<keyword id="KW-1185">Reference proteome</keyword>
<keyword id="KW-0694">RNA-binding</keyword>
<keyword id="KW-0820">tRNA-binding</keyword>
<name>DTD1_MOUSE</name>
<comment type="function">
    <text evidence="1">An aminoacyl-tRNA editing enzyme that deacylates mischarged D-aminoacyl-tRNAs. Also deacylates mischarged glycyl-tRNA(Ala), protecting cells against glycine mischarging by AlaRS. Acts via tRNA-based rather than protein-based catalysis; rejects L-amino acids rather than detecting D-amino acids in the active site. By recycling D-aminoacyl-tRNA to D-amino acids and free tRNA molecules, this enzyme counteracts the toxicity associated with the formation of D-aminoacyl-tRNA entities in vivo and helps enforce protein L-homochirality.</text>
</comment>
<comment type="function">
    <text evidence="2">ATPase involved in DNA replication, may facilitate loading of CDC45 onto pre-replication complexes.</text>
</comment>
<comment type="catalytic activity">
    <reaction evidence="1">
        <text>glycyl-tRNA(Ala) + H2O = tRNA(Ala) + glycine + H(+)</text>
        <dbReference type="Rhea" id="RHEA:53744"/>
        <dbReference type="Rhea" id="RHEA-COMP:9657"/>
        <dbReference type="Rhea" id="RHEA-COMP:13640"/>
        <dbReference type="ChEBI" id="CHEBI:15377"/>
        <dbReference type="ChEBI" id="CHEBI:15378"/>
        <dbReference type="ChEBI" id="CHEBI:57305"/>
        <dbReference type="ChEBI" id="CHEBI:78442"/>
        <dbReference type="ChEBI" id="CHEBI:78522"/>
        <dbReference type="EC" id="3.1.1.96"/>
    </reaction>
</comment>
<comment type="catalytic activity">
    <reaction evidence="1">
        <text>a D-aminoacyl-tRNA + H2O = a tRNA + a D-alpha-amino acid + H(+)</text>
        <dbReference type="Rhea" id="RHEA:13953"/>
        <dbReference type="Rhea" id="RHEA-COMP:10123"/>
        <dbReference type="Rhea" id="RHEA-COMP:10124"/>
        <dbReference type="ChEBI" id="CHEBI:15377"/>
        <dbReference type="ChEBI" id="CHEBI:15378"/>
        <dbReference type="ChEBI" id="CHEBI:59871"/>
        <dbReference type="ChEBI" id="CHEBI:78442"/>
        <dbReference type="ChEBI" id="CHEBI:79333"/>
        <dbReference type="EC" id="3.1.1.96"/>
    </reaction>
</comment>
<comment type="subunit">
    <text evidence="2">Homodimer. Interacts with CDC45 and TOPBP1 (By similarity).</text>
</comment>
<comment type="subcellular location">
    <subcellularLocation>
        <location evidence="2">Nucleus</location>
    </subcellularLocation>
    <subcellularLocation>
        <location evidence="1">Cytoplasm</location>
    </subcellularLocation>
    <text evidence="2">Associated with chromatin at some replication origins containing functional DNA-unwinding elements (By similarity).</text>
</comment>
<comment type="alternative products">
    <event type="alternative splicing"/>
    <isoform>
        <id>Q9DD18-1</id>
        <name>1</name>
        <sequence type="displayed"/>
    </isoform>
    <isoform>
        <id>Q9DD18-2</id>
        <name>2</name>
        <sequence type="described" ref="VSP_026130"/>
    </isoform>
</comment>
<comment type="domain">
    <text evidence="1">A Gly-cisPro motif from one monomer fits into the active site of the other monomer to allow specific chiral rejection of L-amino acids.</text>
</comment>
<comment type="PTM">
    <text evidence="2">Preferentially phosphorylated in cells arrested early in S phase. Phosphorylation in the C-terminus weakens the interaction with CDC45 (By similarity).</text>
</comment>
<comment type="similarity">
    <text evidence="6">Belongs to the DTD family.</text>
</comment>
<comment type="sequence caution" evidence="6">
    <conflict type="frameshift">
        <sequence resource="EMBL-CDS" id="BAB30808"/>
    </conflict>
</comment>
<protein>
    <recommendedName>
        <fullName evidence="1">D-aminoacyl-tRNA deacylase 1</fullName>
        <shortName>DTD</shortName>
        <ecNumber evidence="1">3.1.1.96</ecNumber>
    </recommendedName>
    <alternativeName>
        <fullName>DNA-unwinding element-binding protein B</fullName>
        <shortName>DUE-B</shortName>
    </alternativeName>
    <alternativeName>
        <fullName evidence="1">Gly-tRNA(Ala) deacylase</fullName>
    </alternativeName>
</protein>
<dbReference type="EC" id="3.1.1.96" evidence="1"/>
<dbReference type="EMBL" id="AK003594">
    <property type="protein sequence ID" value="BAB22882.1"/>
    <property type="molecule type" value="mRNA"/>
</dbReference>
<dbReference type="EMBL" id="AK010822">
    <property type="protein sequence ID" value="BAB27205.1"/>
    <property type="molecule type" value="mRNA"/>
</dbReference>
<dbReference type="EMBL" id="AK011917">
    <property type="protein sequence ID" value="BAB27914.1"/>
    <property type="molecule type" value="mRNA"/>
</dbReference>
<dbReference type="EMBL" id="AK017565">
    <property type="protein sequence ID" value="BAB30808.1"/>
    <property type="status" value="ALT_FRAME"/>
    <property type="molecule type" value="mRNA"/>
</dbReference>
<dbReference type="EMBL" id="AK158898">
    <property type="protein sequence ID" value="BAE34719.1"/>
    <property type="molecule type" value="mRNA"/>
</dbReference>
<dbReference type="EMBL" id="AL808119">
    <property type="status" value="NOT_ANNOTATED_CDS"/>
    <property type="molecule type" value="Genomic_DNA"/>
</dbReference>
<dbReference type="EMBL" id="AL844516">
    <property type="status" value="NOT_ANNOTATED_CDS"/>
    <property type="molecule type" value="Genomic_DNA"/>
</dbReference>
<dbReference type="EMBL" id="BC026537">
    <property type="protein sequence ID" value="AAH26537.1"/>
    <property type="molecule type" value="mRNA"/>
</dbReference>
<dbReference type="CCDS" id="CCDS16824.1">
    <molecule id="Q9DD18-1"/>
</dbReference>
<dbReference type="RefSeq" id="NP_079590.1">
    <molecule id="Q9DD18-1"/>
    <property type="nucleotide sequence ID" value="NM_025314.3"/>
</dbReference>
<dbReference type="SMR" id="Q9DD18"/>
<dbReference type="BioGRID" id="211173">
    <property type="interactions" value="1"/>
</dbReference>
<dbReference type="FunCoup" id="Q9DD18">
    <property type="interactions" value="1453"/>
</dbReference>
<dbReference type="IntAct" id="Q9DD18">
    <property type="interactions" value="1"/>
</dbReference>
<dbReference type="MINT" id="Q9DD18"/>
<dbReference type="STRING" id="10090.ENSMUSP00000028917"/>
<dbReference type="GlyGen" id="Q9DD18">
    <property type="glycosylation" value="1 site"/>
</dbReference>
<dbReference type="iPTMnet" id="Q9DD18"/>
<dbReference type="PhosphoSitePlus" id="Q9DD18"/>
<dbReference type="SwissPalm" id="Q9DD18"/>
<dbReference type="jPOST" id="Q9DD18"/>
<dbReference type="PaxDb" id="10090-ENSMUSP00000028917"/>
<dbReference type="PeptideAtlas" id="Q9DD18"/>
<dbReference type="ProteomicsDB" id="279817">
    <molecule id="Q9DD18-1"/>
</dbReference>
<dbReference type="ProteomicsDB" id="279818">
    <molecule id="Q9DD18-2"/>
</dbReference>
<dbReference type="Pumba" id="Q9DD18"/>
<dbReference type="Antibodypedia" id="42815">
    <property type="antibodies" value="117 antibodies from 19 providers"/>
</dbReference>
<dbReference type="DNASU" id="66044"/>
<dbReference type="Ensembl" id="ENSMUST00000028917.7">
    <molecule id="Q9DD18-1"/>
    <property type="protein sequence ID" value="ENSMUSP00000028917.7"/>
    <property type="gene ID" value="ENSMUSG00000027430.13"/>
</dbReference>
<dbReference type="GeneID" id="66044"/>
<dbReference type="KEGG" id="mmu:66044"/>
<dbReference type="UCSC" id="uc008mro.2">
    <molecule id="Q9DD18-1"/>
    <property type="organism name" value="mouse"/>
</dbReference>
<dbReference type="AGR" id="MGI:1913294"/>
<dbReference type="CTD" id="92675"/>
<dbReference type="MGI" id="MGI:1913294">
    <property type="gene designation" value="Dtd1"/>
</dbReference>
<dbReference type="VEuPathDB" id="HostDB:ENSMUSG00000027430"/>
<dbReference type="eggNOG" id="KOG3323">
    <property type="taxonomic scope" value="Eukaryota"/>
</dbReference>
<dbReference type="GeneTree" id="ENSGT00940000153431"/>
<dbReference type="HOGENOM" id="CLU_076901_0_0_1"/>
<dbReference type="InParanoid" id="Q9DD18"/>
<dbReference type="OMA" id="VFGADMK"/>
<dbReference type="OrthoDB" id="275783at2759"/>
<dbReference type="PhylomeDB" id="Q9DD18"/>
<dbReference type="TreeFam" id="TF314886"/>
<dbReference type="BioGRID-ORCS" id="66044">
    <property type="hits" value="2 hits in 77 CRISPR screens"/>
</dbReference>
<dbReference type="ChiTaRS" id="Dtd1">
    <property type="organism name" value="mouse"/>
</dbReference>
<dbReference type="PRO" id="PR:Q9DD18"/>
<dbReference type="Proteomes" id="UP000000589">
    <property type="component" value="Chromosome 2"/>
</dbReference>
<dbReference type="RNAct" id="Q9DD18">
    <property type="molecule type" value="protein"/>
</dbReference>
<dbReference type="Bgee" id="ENSMUSG00000027430">
    <property type="expression patterns" value="Expressed in ventromedial nucleus of hypothalamus and 271 other cell types or tissues"/>
</dbReference>
<dbReference type="GO" id="GO:0005737">
    <property type="term" value="C:cytoplasm"/>
    <property type="evidence" value="ECO:0007669"/>
    <property type="project" value="UniProtKB-SubCell"/>
</dbReference>
<dbReference type="GO" id="GO:0005634">
    <property type="term" value="C:nucleus"/>
    <property type="evidence" value="ECO:0007669"/>
    <property type="project" value="UniProtKB-SubCell"/>
</dbReference>
<dbReference type="GO" id="GO:0051499">
    <property type="term" value="F:D-aminoacyl-tRNA deacylase activity"/>
    <property type="evidence" value="ECO:0007669"/>
    <property type="project" value="UniProtKB-EC"/>
</dbReference>
<dbReference type="GO" id="GO:0003677">
    <property type="term" value="F:DNA binding"/>
    <property type="evidence" value="ECO:0007669"/>
    <property type="project" value="UniProtKB-KW"/>
</dbReference>
<dbReference type="GO" id="GO:0046872">
    <property type="term" value="F:metal ion binding"/>
    <property type="evidence" value="ECO:0007669"/>
    <property type="project" value="UniProtKB-KW"/>
</dbReference>
<dbReference type="GO" id="GO:0000049">
    <property type="term" value="F:tRNA binding"/>
    <property type="evidence" value="ECO:0007669"/>
    <property type="project" value="UniProtKB-KW"/>
</dbReference>
<dbReference type="GO" id="GO:0006260">
    <property type="term" value="P:DNA replication"/>
    <property type="evidence" value="ECO:0007669"/>
    <property type="project" value="UniProtKB-KW"/>
</dbReference>
<dbReference type="CDD" id="cd00563">
    <property type="entry name" value="Dtyr_deacylase"/>
    <property type="match status" value="1"/>
</dbReference>
<dbReference type="FunFam" id="3.50.80.10:FF:000001">
    <property type="entry name" value="D-aminoacyl-tRNA deacylase"/>
    <property type="match status" value="1"/>
</dbReference>
<dbReference type="Gene3D" id="3.50.80.10">
    <property type="entry name" value="D-tyrosyl-tRNA(Tyr) deacylase"/>
    <property type="match status" value="1"/>
</dbReference>
<dbReference type="HAMAP" id="MF_00518">
    <property type="entry name" value="Deacylase_Dtd"/>
    <property type="match status" value="1"/>
</dbReference>
<dbReference type="InterPro" id="IPR003732">
    <property type="entry name" value="Daa-tRNA_deacyls_DTD"/>
</dbReference>
<dbReference type="InterPro" id="IPR023509">
    <property type="entry name" value="DTD-like_sf"/>
</dbReference>
<dbReference type="NCBIfam" id="TIGR00256">
    <property type="entry name" value="D-aminoacyl-tRNA deacylase"/>
    <property type="match status" value="1"/>
</dbReference>
<dbReference type="PANTHER" id="PTHR10472:SF5">
    <property type="entry name" value="D-AMINOACYL-TRNA DEACYLASE 1"/>
    <property type="match status" value="1"/>
</dbReference>
<dbReference type="PANTHER" id="PTHR10472">
    <property type="entry name" value="D-TYROSYL-TRNA TYR DEACYLASE"/>
    <property type="match status" value="1"/>
</dbReference>
<dbReference type="Pfam" id="PF02580">
    <property type="entry name" value="Tyr_Deacylase"/>
    <property type="match status" value="1"/>
</dbReference>
<dbReference type="SUPFAM" id="SSF69500">
    <property type="entry name" value="DTD-like"/>
    <property type="match status" value="1"/>
</dbReference>
<gene>
    <name type="primary">Dtd1</name>
    <name type="synonym">Hars2</name>
</gene>